<organism>
    <name type="scientific">Janthinobacterium sp. (strain Marseille)</name>
    <name type="common">Minibacterium massiliensis</name>
    <dbReference type="NCBI Taxonomy" id="375286"/>
    <lineage>
        <taxon>Bacteria</taxon>
        <taxon>Pseudomonadati</taxon>
        <taxon>Pseudomonadota</taxon>
        <taxon>Betaproteobacteria</taxon>
        <taxon>Burkholderiales</taxon>
        <taxon>Oxalobacteraceae</taxon>
        <taxon>Janthinobacterium</taxon>
    </lineage>
</organism>
<protein>
    <recommendedName>
        <fullName evidence="1">Small ribosomal subunit protein bS20</fullName>
    </recommendedName>
    <alternativeName>
        <fullName evidence="3">30S ribosomal protein S20</fullName>
    </alternativeName>
</protein>
<comment type="function">
    <text evidence="1">Binds directly to 16S ribosomal RNA.</text>
</comment>
<comment type="similarity">
    <text evidence="1">Belongs to the bacterial ribosomal protein bS20 family.</text>
</comment>
<feature type="chain" id="PRO_1000014595" description="Small ribosomal subunit protein bS20">
    <location>
        <begin position="1"/>
        <end position="87"/>
    </location>
</feature>
<feature type="region of interest" description="Disordered" evidence="2">
    <location>
        <begin position="1"/>
        <end position="29"/>
    </location>
</feature>
<feature type="compositionally biased region" description="Polar residues" evidence="2">
    <location>
        <begin position="20"/>
        <end position="29"/>
    </location>
</feature>
<keyword id="KW-0687">Ribonucleoprotein</keyword>
<keyword id="KW-0689">Ribosomal protein</keyword>
<keyword id="KW-0694">RNA-binding</keyword>
<keyword id="KW-0699">rRNA-binding</keyword>
<gene>
    <name evidence="1" type="primary">rpsT</name>
    <name type="ordered locus">mma_2519</name>
</gene>
<proteinExistence type="inferred from homology"/>
<sequence>MANTAQARKRARQAVKQNAHNSSQRSTLRTAVKAVRKAIEAGDKAAAAQVFLASVSTIDRIADKKIIHKNKAARHKSRLAAALKALA</sequence>
<dbReference type="EMBL" id="CP000269">
    <property type="protein sequence ID" value="ABR91653.1"/>
    <property type="molecule type" value="Genomic_DNA"/>
</dbReference>
<dbReference type="RefSeq" id="WP_012080371.1">
    <property type="nucleotide sequence ID" value="NC_009659.1"/>
</dbReference>
<dbReference type="SMR" id="A6T112"/>
<dbReference type="STRING" id="375286.mma_2519"/>
<dbReference type="KEGG" id="mms:mma_2519"/>
<dbReference type="eggNOG" id="COG0268">
    <property type="taxonomic scope" value="Bacteria"/>
</dbReference>
<dbReference type="HOGENOM" id="CLU_160655_4_0_4"/>
<dbReference type="Proteomes" id="UP000006388">
    <property type="component" value="Chromosome"/>
</dbReference>
<dbReference type="GO" id="GO:0005829">
    <property type="term" value="C:cytosol"/>
    <property type="evidence" value="ECO:0007669"/>
    <property type="project" value="TreeGrafter"/>
</dbReference>
<dbReference type="GO" id="GO:0015935">
    <property type="term" value="C:small ribosomal subunit"/>
    <property type="evidence" value="ECO:0007669"/>
    <property type="project" value="TreeGrafter"/>
</dbReference>
<dbReference type="GO" id="GO:0070181">
    <property type="term" value="F:small ribosomal subunit rRNA binding"/>
    <property type="evidence" value="ECO:0007669"/>
    <property type="project" value="TreeGrafter"/>
</dbReference>
<dbReference type="GO" id="GO:0003735">
    <property type="term" value="F:structural constituent of ribosome"/>
    <property type="evidence" value="ECO:0007669"/>
    <property type="project" value="InterPro"/>
</dbReference>
<dbReference type="GO" id="GO:0006412">
    <property type="term" value="P:translation"/>
    <property type="evidence" value="ECO:0007669"/>
    <property type="project" value="UniProtKB-UniRule"/>
</dbReference>
<dbReference type="FunFam" id="1.20.58.110:FF:000001">
    <property type="entry name" value="30S ribosomal protein S20"/>
    <property type="match status" value="1"/>
</dbReference>
<dbReference type="Gene3D" id="1.20.58.110">
    <property type="entry name" value="Ribosomal protein S20"/>
    <property type="match status" value="1"/>
</dbReference>
<dbReference type="HAMAP" id="MF_00500">
    <property type="entry name" value="Ribosomal_bS20"/>
    <property type="match status" value="1"/>
</dbReference>
<dbReference type="InterPro" id="IPR002583">
    <property type="entry name" value="Ribosomal_bS20"/>
</dbReference>
<dbReference type="InterPro" id="IPR036510">
    <property type="entry name" value="Ribosomal_bS20_sf"/>
</dbReference>
<dbReference type="NCBIfam" id="TIGR00029">
    <property type="entry name" value="S20"/>
    <property type="match status" value="1"/>
</dbReference>
<dbReference type="PANTHER" id="PTHR33398">
    <property type="entry name" value="30S RIBOSOMAL PROTEIN S20"/>
    <property type="match status" value="1"/>
</dbReference>
<dbReference type="PANTHER" id="PTHR33398:SF1">
    <property type="entry name" value="SMALL RIBOSOMAL SUBUNIT PROTEIN BS20C"/>
    <property type="match status" value="1"/>
</dbReference>
<dbReference type="Pfam" id="PF01649">
    <property type="entry name" value="Ribosomal_S20p"/>
    <property type="match status" value="1"/>
</dbReference>
<dbReference type="SUPFAM" id="SSF46992">
    <property type="entry name" value="Ribosomal protein S20"/>
    <property type="match status" value="1"/>
</dbReference>
<reference key="1">
    <citation type="journal article" date="2007" name="PLoS Genet.">
        <title>Genome analysis of Minibacterium massiliensis highlights the convergent evolution of water-living bacteria.</title>
        <authorList>
            <person name="Audic S."/>
            <person name="Robert C."/>
            <person name="Campagna B."/>
            <person name="Parinello H."/>
            <person name="Claverie J.-M."/>
            <person name="Raoult D."/>
            <person name="Drancourt M."/>
        </authorList>
    </citation>
    <scope>NUCLEOTIDE SEQUENCE [LARGE SCALE GENOMIC DNA]</scope>
    <source>
        <strain>Marseille</strain>
    </source>
</reference>
<name>RS20_JANMA</name>
<accession>A6T112</accession>
<evidence type="ECO:0000255" key="1">
    <source>
        <dbReference type="HAMAP-Rule" id="MF_00500"/>
    </source>
</evidence>
<evidence type="ECO:0000256" key="2">
    <source>
        <dbReference type="SAM" id="MobiDB-lite"/>
    </source>
</evidence>
<evidence type="ECO:0000305" key="3"/>